<evidence type="ECO:0000255" key="1">
    <source>
        <dbReference type="HAMAP-Rule" id="MF_01336"/>
    </source>
</evidence>
<evidence type="ECO:0000305" key="2"/>
<comment type="function">
    <text evidence="1">This is one of the proteins that binds to the 5S RNA in the ribosome where it forms part of the central protuberance.</text>
</comment>
<comment type="subunit">
    <text evidence="1">Part of the 50S ribosomal subunit; part of the 5S rRNA/L5/L18/L25 subcomplex. Contacts the 5S rRNA. Binds to the 5S rRNA independently of L5 and L18.</text>
</comment>
<comment type="similarity">
    <text evidence="1">Belongs to the bacterial ribosomal protein bL25 family.</text>
</comment>
<dbReference type="EMBL" id="AE017220">
    <property type="protein sequence ID" value="AAX66147.1"/>
    <property type="molecule type" value="Genomic_DNA"/>
</dbReference>
<dbReference type="RefSeq" id="WP_000494192.1">
    <property type="nucleotide sequence ID" value="NC_006905.1"/>
</dbReference>
<dbReference type="SMR" id="Q57MB4"/>
<dbReference type="KEGG" id="sec:SCH_2241"/>
<dbReference type="HOGENOM" id="CLU_137946_0_0_6"/>
<dbReference type="Proteomes" id="UP000000538">
    <property type="component" value="Chromosome"/>
</dbReference>
<dbReference type="GO" id="GO:0022625">
    <property type="term" value="C:cytosolic large ribosomal subunit"/>
    <property type="evidence" value="ECO:0007669"/>
    <property type="project" value="TreeGrafter"/>
</dbReference>
<dbReference type="GO" id="GO:0008097">
    <property type="term" value="F:5S rRNA binding"/>
    <property type="evidence" value="ECO:0007669"/>
    <property type="project" value="InterPro"/>
</dbReference>
<dbReference type="GO" id="GO:0003735">
    <property type="term" value="F:structural constituent of ribosome"/>
    <property type="evidence" value="ECO:0007669"/>
    <property type="project" value="InterPro"/>
</dbReference>
<dbReference type="GO" id="GO:0006412">
    <property type="term" value="P:translation"/>
    <property type="evidence" value="ECO:0007669"/>
    <property type="project" value="UniProtKB-UniRule"/>
</dbReference>
<dbReference type="CDD" id="cd00495">
    <property type="entry name" value="Ribosomal_L25_TL5_CTC"/>
    <property type="match status" value="1"/>
</dbReference>
<dbReference type="FunFam" id="2.40.240.10:FF:000002">
    <property type="entry name" value="50S ribosomal protein L25"/>
    <property type="match status" value="1"/>
</dbReference>
<dbReference type="Gene3D" id="2.40.240.10">
    <property type="entry name" value="Ribosomal Protein L25, Chain P"/>
    <property type="match status" value="1"/>
</dbReference>
<dbReference type="HAMAP" id="MF_01336">
    <property type="entry name" value="Ribosomal_bL25"/>
    <property type="match status" value="1"/>
</dbReference>
<dbReference type="InterPro" id="IPR020056">
    <property type="entry name" value="Rbsml_bL25/Gln-tRNA_synth_N"/>
</dbReference>
<dbReference type="InterPro" id="IPR011035">
    <property type="entry name" value="Ribosomal_bL25/Gln-tRNA_synth"/>
</dbReference>
<dbReference type="InterPro" id="IPR020055">
    <property type="entry name" value="Ribosomal_bL25_short"/>
</dbReference>
<dbReference type="InterPro" id="IPR029751">
    <property type="entry name" value="Ribosomal_L25_dom"/>
</dbReference>
<dbReference type="InterPro" id="IPR020930">
    <property type="entry name" value="Ribosomal_uL5_bac-type"/>
</dbReference>
<dbReference type="NCBIfam" id="NF004612">
    <property type="entry name" value="PRK05943.1"/>
    <property type="match status" value="1"/>
</dbReference>
<dbReference type="PANTHER" id="PTHR33284">
    <property type="entry name" value="RIBOSOMAL PROTEIN L25/GLN-TRNA SYNTHETASE, ANTI-CODON-BINDING DOMAIN-CONTAINING PROTEIN"/>
    <property type="match status" value="1"/>
</dbReference>
<dbReference type="PANTHER" id="PTHR33284:SF1">
    <property type="entry name" value="RIBOSOMAL PROTEIN L25_GLN-TRNA SYNTHETASE, ANTI-CODON-BINDING DOMAIN-CONTAINING PROTEIN"/>
    <property type="match status" value="1"/>
</dbReference>
<dbReference type="Pfam" id="PF01386">
    <property type="entry name" value="Ribosomal_L25p"/>
    <property type="match status" value="1"/>
</dbReference>
<dbReference type="SUPFAM" id="SSF50715">
    <property type="entry name" value="Ribosomal protein L25-like"/>
    <property type="match status" value="1"/>
</dbReference>
<name>RL25_SALCH</name>
<organism>
    <name type="scientific">Salmonella choleraesuis (strain SC-B67)</name>
    <dbReference type="NCBI Taxonomy" id="321314"/>
    <lineage>
        <taxon>Bacteria</taxon>
        <taxon>Pseudomonadati</taxon>
        <taxon>Pseudomonadota</taxon>
        <taxon>Gammaproteobacteria</taxon>
        <taxon>Enterobacterales</taxon>
        <taxon>Enterobacteriaceae</taxon>
        <taxon>Salmonella</taxon>
    </lineage>
</organism>
<feature type="chain" id="PRO_0000181490" description="Large ribosomal subunit protein bL25">
    <location>
        <begin position="1"/>
        <end position="94"/>
    </location>
</feature>
<keyword id="KW-0687">Ribonucleoprotein</keyword>
<keyword id="KW-0689">Ribosomal protein</keyword>
<keyword id="KW-0694">RNA-binding</keyword>
<keyword id="KW-0699">rRNA-binding</keyword>
<proteinExistence type="inferred from homology"/>
<reference key="1">
    <citation type="journal article" date="2005" name="Nucleic Acids Res.">
        <title>The genome sequence of Salmonella enterica serovar Choleraesuis, a highly invasive and resistant zoonotic pathogen.</title>
        <authorList>
            <person name="Chiu C.-H."/>
            <person name="Tang P."/>
            <person name="Chu C."/>
            <person name="Hu S."/>
            <person name="Bao Q."/>
            <person name="Yu J."/>
            <person name="Chou Y.-Y."/>
            <person name="Wang H.-S."/>
            <person name="Lee Y.-S."/>
        </authorList>
    </citation>
    <scope>NUCLEOTIDE SEQUENCE [LARGE SCALE GENOMIC DNA]</scope>
    <source>
        <strain>SC-B67</strain>
    </source>
</reference>
<gene>
    <name evidence="1" type="primary">rplY</name>
    <name type="ordered locus">SCH_2241</name>
</gene>
<protein>
    <recommendedName>
        <fullName evidence="1">Large ribosomal subunit protein bL25</fullName>
    </recommendedName>
    <alternativeName>
        <fullName evidence="2">50S ribosomal protein L25</fullName>
    </alternativeName>
</protein>
<accession>Q57MB4</accession>
<sequence length="94" mass="10541">MFTINAEVRKEQGKGASRRLRAANKFPAIIYGGSEAPIAIELDHDQVMNMQAKAEFYSEVLTLVVDGKEVKVKAQAVQRHAYKPKLTHIDFVRA</sequence>